<proteinExistence type="inferred from homology"/>
<protein>
    <recommendedName>
        <fullName evidence="1">Glutamate-1-semialdehyde 2,1-aminomutase 2</fullName>
        <shortName evidence="1">GSA 2</shortName>
        <ecNumber evidence="1">5.4.3.8</ecNumber>
    </recommendedName>
    <alternativeName>
        <fullName evidence="1">Glutamate-1-semialdehyde aminotransferase 2</fullName>
        <shortName evidence="1">GSA-AT 2</shortName>
    </alternativeName>
</protein>
<gene>
    <name evidence="1" type="primary">hemL2</name>
    <name type="ordered locus">EAT1b_2646</name>
</gene>
<sequence length="434" mass="47444">MTYNQTRSQEAFEQARPLMPGGVNSPVRAYKSVGMTPIFAERGEGSRVYDIDGNEYIDYVLSWGPLILGHRDPVVTKAIQEQAEKGWTFGTPTELETKMAELVIDRVPSIEMVRMVNSGTEATMAALRLARGYTGKTKILKFEGCYHGHGDSLLIKAGSGVATLGLPDSPGVPKELASHTLTVPYNDLDAVRVAFEKYGDDLAGVIVEPAAGNMGFVPPQPGFLEGLREITEQNGALLIFDEVMTGFRVGYNCAQGYFGVTPDLTCLGKVIGGGLPVGAYGGKREIMEQIAPQGPIYQAGTLSGNPLAMIAGYTTLSQLKPEHYEEFERKADRLAEGFTQAGEKYNIPHDTNRAGSMFGFFFTNEKVTNFEKAKSANLEMFRSYYQKMAARGVFLPPSQFEGLFLSTAHTDEDIEKTIAAVEATFKELQEEFSL</sequence>
<accession>C4L4J9</accession>
<keyword id="KW-0963">Cytoplasm</keyword>
<keyword id="KW-0413">Isomerase</keyword>
<keyword id="KW-0627">Porphyrin biosynthesis</keyword>
<keyword id="KW-0663">Pyridoxal phosphate</keyword>
<evidence type="ECO:0000255" key="1">
    <source>
        <dbReference type="HAMAP-Rule" id="MF_00375"/>
    </source>
</evidence>
<name>GSA2_EXISA</name>
<organism>
    <name type="scientific">Exiguobacterium sp. (strain ATCC BAA-1283 / AT1b)</name>
    <dbReference type="NCBI Taxonomy" id="360911"/>
    <lineage>
        <taxon>Bacteria</taxon>
        <taxon>Bacillati</taxon>
        <taxon>Bacillota</taxon>
        <taxon>Bacilli</taxon>
        <taxon>Bacillales</taxon>
        <taxon>Bacillales Family XII. Incertae Sedis</taxon>
        <taxon>Exiguobacterium</taxon>
    </lineage>
</organism>
<dbReference type="EC" id="5.4.3.8" evidence="1"/>
<dbReference type="EMBL" id="CP001615">
    <property type="protein sequence ID" value="ACQ71562.1"/>
    <property type="molecule type" value="Genomic_DNA"/>
</dbReference>
<dbReference type="RefSeq" id="WP_015881121.1">
    <property type="nucleotide sequence ID" value="NC_012673.1"/>
</dbReference>
<dbReference type="SMR" id="C4L4J9"/>
<dbReference type="STRING" id="360911.EAT1b_2646"/>
<dbReference type="KEGG" id="eat:EAT1b_2646"/>
<dbReference type="eggNOG" id="COG0001">
    <property type="taxonomic scope" value="Bacteria"/>
</dbReference>
<dbReference type="HOGENOM" id="CLU_016922_1_5_9"/>
<dbReference type="OrthoDB" id="9807885at2"/>
<dbReference type="UniPathway" id="UPA00251">
    <property type="reaction ID" value="UER00317"/>
</dbReference>
<dbReference type="Proteomes" id="UP000000716">
    <property type="component" value="Chromosome"/>
</dbReference>
<dbReference type="GO" id="GO:0005737">
    <property type="term" value="C:cytoplasm"/>
    <property type="evidence" value="ECO:0007669"/>
    <property type="project" value="UniProtKB-SubCell"/>
</dbReference>
<dbReference type="GO" id="GO:0042286">
    <property type="term" value="F:glutamate-1-semialdehyde 2,1-aminomutase activity"/>
    <property type="evidence" value="ECO:0007669"/>
    <property type="project" value="UniProtKB-UniRule"/>
</dbReference>
<dbReference type="GO" id="GO:0030170">
    <property type="term" value="F:pyridoxal phosphate binding"/>
    <property type="evidence" value="ECO:0007669"/>
    <property type="project" value="InterPro"/>
</dbReference>
<dbReference type="GO" id="GO:0008483">
    <property type="term" value="F:transaminase activity"/>
    <property type="evidence" value="ECO:0007669"/>
    <property type="project" value="InterPro"/>
</dbReference>
<dbReference type="GO" id="GO:0006782">
    <property type="term" value="P:protoporphyrinogen IX biosynthetic process"/>
    <property type="evidence" value="ECO:0007669"/>
    <property type="project" value="UniProtKB-UniRule"/>
</dbReference>
<dbReference type="CDD" id="cd00610">
    <property type="entry name" value="OAT_like"/>
    <property type="match status" value="1"/>
</dbReference>
<dbReference type="FunFam" id="3.40.640.10:FF:000021">
    <property type="entry name" value="Glutamate-1-semialdehyde 2,1-aminomutase"/>
    <property type="match status" value="1"/>
</dbReference>
<dbReference type="Gene3D" id="3.90.1150.10">
    <property type="entry name" value="Aspartate Aminotransferase, domain 1"/>
    <property type="match status" value="1"/>
</dbReference>
<dbReference type="Gene3D" id="3.40.640.10">
    <property type="entry name" value="Type I PLP-dependent aspartate aminotransferase-like (Major domain)"/>
    <property type="match status" value="1"/>
</dbReference>
<dbReference type="HAMAP" id="MF_00375">
    <property type="entry name" value="HemL_aminotrans_3"/>
    <property type="match status" value="1"/>
</dbReference>
<dbReference type="InterPro" id="IPR004639">
    <property type="entry name" value="4pyrrol_synth_GluAld_NH2Trfase"/>
</dbReference>
<dbReference type="InterPro" id="IPR005814">
    <property type="entry name" value="Aminotrans_3"/>
</dbReference>
<dbReference type="InterPro" id="IPR049704">
    <property type="entry name" value="Aminotrans_3_PPA_site"/>
</dbReference>
<dbReference type="InterPro" id="IPR015424">
    <property type="entry name" value="PyrdxlP-dep_Trfase"/>
</dbReference>
<dbReference type="InterPro" id="IPR015421">
    <property type="entry name" value="PyrdxlP-dep_Trfase_major"/>
</dbReference>
<dbReference type="InterPro" id="IPR015422">
    <property type="entry name" value="PyrdxlP-dep_Trfase_small"/>
</dbReference>
<dbReference type="NCBIfam" id="TIGR00713">
    <property type="entry name" value="hemL"/>
    <property type="match status" value="1"/>
</dbReference>
<dbReference type="NCBIfam" id="NF000818">
    <property type="entry name" value="PRK00062.1"/>
    <property type="match status" value="1"/>
</dbReference>
<dbReference type="PANTHER" id="PTHR43713">
    <property type="entry name" value="GLUTAMATE-1-SEMIALDEHYDE 2,1-AMINOMUTASE"/>
    <property type="match status" value="1"/>
</dbReference>
<dbReference type="PANTHER" id="PTHR43713:SF3">
    <property type="entry name" value="GLUTAMATE-1-SEMIALDEHYDE 2,1-AMINOMUTASE 1, CHLOROPLASTIC-RELATED"/>
    <property type="match status" value="1"/>
</dbReference>
<dbReference type="Pfam" id="PF00202">
    <property type="entry name" value="Aminotran_3"/>
    <property type="match status" value="1"/>
</dbReference>
<dbReference type="SUPFAM" id="SSF53383">
    <property type="entry name" value="PLP-dependent transferases"/>
    <property type="match status" value="1"/>
</dbReference>
<dbReference type="PROSITE" id="PS00600">
    <property type="entry name" value="AA_TRANSFER_CLASS_3"/>
    <property type="match status" value="1"/>
</dbReference>
<reference key="1">
    <citation type="journal article" date="2011" name="J. Bacteriol.">
        <title>Complete genome sequence of the Thermophilic Bacterium Exiguobacterium sp. AT1b.</title>
        <authorList>
            <person name="Vishnivetskaya T.A."/>
            <person name="Lucas S."/>
            <person name="Copeland A."/>
            <person name="Lapidus A."/>
            <person name="Glavina del Rio T."/>
            <person name="Dalin E."/>
            <person name="Tice H."/>
            <person name="Bruce D.C."/>
            <person name="Goodwin L.A."/>
            <person name="Pitluck S."/>
            <person name="Saunders E."/>
            <person name="Brettin T."/>
            <person name="Detter C."/>
            <person name="Han C."/>
            <person name="Larimer F."/>
            <person name="Land M.L."/>
            <person name="Hauser L.J."/>
            <person name="Kyrpides N.C."/>
            <person name="Ovchinnikova G."/>
            <person name="Kathariou S."/>
            <person name="Ramaley R.F."/>
            <person name="Rodrigues D.F."/>
            <person name="Hendrix C."/>
            <person name="Richardson P."/>
            <person name="Tiedje J.M."/>
        </authorList>
    </citation>
    <scope>NUCLEOTIDE SEQUENCE [LARGE SCALE GENOMIC DNA]</scope>
    <source>
        <strain>ATCC BAA-1283 / AT1b</strain>
    </source>
</reference>
<feature type="chain" id="PRO_0000382316" description="Glutamate-1-semialdehyde 2,1-aminomutase 2">
    <location>
        <begin position="1"/>
        <end position="434"/>
    </location>
</feature>
<feature type="modified residue" description="N6-(pyridoxal phosphate)lysine" evidence="1">
    <location>
        <position position="269"/>
    </location>
</feature>
<comment type="catalytic activity">
    <reaction evidence="1">
        <text>(S)-4-amino-5-oxopentanoate = 5-aminolevulinate</text>
        <dbReference type="Rhea" id="RHEA:14265"/>
        <dbReference type="ChEBI" id="CHEBI:57501"/>
        <dbReference type="ChEBI" id="CHEBI:356416"/>
        <dbReference type="EC" id="5.4.3.8"/>
    </reaction>
</comment>
<comment type="cofactor">
    <cofactor evidence="1">
        <name>pyridoxal 5'-phosphate</name>
        <dbReference type="ChEBI" id="CHEBI:597326"/>
    </cofactor>
</comment>
<comment type="pathway">
    <text evidence="1">Porphyrin-containing compound metabolism; protoporphyrin-IX biosynthesis; 5-aminolevulinate from L-glutamyl-tRNA(Glu): step 2/2.</text>
</comment>
<comment type="subunit">
    <text evidence="1">Homodimer.</text>
</comment>
<comment type="subcellular location">
    <subcellularLocation>
        <location evidence="1">Cytoplasm</location>
    </subcellularLocation>
</comment>
<comment type="similarity">
    <text evidence="1">Belongs to the class-III pyridoxal-phosphate-dependent aminotransferase family. HemL subfamily.</text>
</comment>